<keyword id="KW-0963">Cytoplasm</keyword>
<keyword id="KW-0255">Endonuclease</keyword>
<keyword id="KW-0378">Hydrolase</keyword>
<keyword id="KW-0479">Metal-binding</keyword>
<keyword id="KW-0540">Nuclease</keyword>
<keyword id="KW-0690">Ribosome biogenesis</keyword>
<keyword id="KW-0698">rRNA processing</keyword>
<keyword id="KW-0862">Zinc</keyword>
<proteinExistence type="inferred from homology"/>
<reference key="1">
    <citation type="journal article" date="2008" name="Proc. Natl. Acad. Sci. U.S.A.">
        <title>Complete genome of the uncultured termite group 1 bacteria in a single host protist cell.</title>
        <authorList>
            <person name="Hongoh Y."/>
            <person name="Sharma V.K."/>
            <person name="Prakash T."/>
            <person name="Noda S."/>
            <person name="Taylor T.D."/>
            <person name="Kudo T."/>
            <person name="Sakaki Y."/>
            <person name="Toyoda A."/>
            <person name="Hattori M."/>
            <person name="Ohkuma M."/>
        </authorList>
    </citation>
    <scope>NUCLEOTIDE SEQUENCE [LARGE SCALE GENOMIC DNA]</scope>
</reference>
<evidence type="ECO:0000255" key="1">
    <source>
        <dbReference type="HAMAP-Rule" id="MF_00009"/>
    </source>
</evidence>
<feature type="chain" id="PRO_1000200005" description="Endoribonuclease YbeY">
    <location>
        <begin position="1"/>
        <end position="141"/>
    </location>
</feature>
<feature type="binding site" evidence="1">
    <location>
        <position position="107"/>
    </location>
    <ligand>
        <name>Zn(2+)</name>
        <dbReference type="ChEBI" id="CHEBI:29105"/>
        <note>catalytic</note>
    </ligand>
</feature>
<feature type="binding site" evidence="1">
    <location>
        <position position="111"/>
    </location>
    <ligand>
        <name>Zn(2+)</name>
        <dbReference type="ChEBI" id="CHEBI:29105"/>
        <note>catalytic</note>
    </ligand>
</feature>
<feature type="binding site" evidence="1">
    <location>
        <position position="117"/>
    </location>
    <ligand>
        <name>Zn(2+)</name>
        <dbReference type="ChEBI" id="CHEBI:29105"/>
        <note>catalytic</note>
    </ligand>
</feature>
<accession>B1GZY8</accession>
<name>YBEY_ENDTX</name>
<gene>
    <name evidence="1" type="primary">ybeY</name>
    <name type="ordered locus">TGRD_337</name>
</gene>
<organism>
    <name type="scientific">Endomicrobium trichonymphae</name>
    <dbReference type="NCBI Taxonomy" id="1408204"/>
    <lineage>
        <taxon>Bacteria</taxon>
        <taxon>Pseudomonadati</taxon>
        <taxon>Elusimicrobiota</taxon>
        <taxon>Endomicrobiia</taxon>
        <taxon>Endomicrobiales</taxon>
        <taxon>Endomicrobiaceae</taxon>
        <taxon>Candidatus Endomicrobiellum</taxon>
    </lineage>
</organism>
<protein>
    <recommendedName>
        <fullName evidence="1">Endoribonuclease YbeY</fullName>
        <ecNumber evidence="1">3.1.-.-</ecNumber>
    </recommendedName>
</protein>
<sequence>MKKDNNIINFVNFPKQHVPLLKIAAATVLKSEKIKRYQVNFIMVDDKEIRKLNTKYRKIKRITDVISFLVVPEFFMGDIYISKTRSQEQAKEYSNTWQQELAYLVIHGLLHLCGYTDYDAVNKTKMFTKQDKIFKCLFYRL</sequence>
<comment type="function">
    <text evidence="1">Single strand-specific metallo-endoribonuclease involved in late-stage 70S ribosome quality control and in maturation of the 3' terminus of the 16S rRNA.</text>
</comment>
<comment type="cofactor">
    <cofactor evidence="1">
        <name>Zn(2+)</name>
        <dbReference type="ChEBI" id="CHEBI:29105"/>
    </cofactor>
    <text evidence="1">Binds 1 zinc ion.</text>
</comment>
<comment type="subcellular location">
    <subcellularLocation>
        <location evidence="1">Cytoplasm</location>
    </subcellularLocation>
</comment>
<comment type="similarity">
    <text evidence="1">Belongs to the endoribonuclease YbeY family.</text>
</comment>
<dbReference type="EC" id="3.1.-.-" evidence="1"/>
<dbReference type="EMBL" id="AP009510">
    <property type="protein sequence ID" value="BAG13820.1"/>
    <property type="molecule type" value="Genomic_DNA"/>
</dbReference>
<dbReference type="RefSeq" id="WP_015423347.1">
    <property type="nucleotide sequence ID" value="NC_020419.1"/>
</dbReference>
<dbReference type="SMR" id="B1GZY8"/>
<dbReference type="STRING" id="471821.TGRD_337"/>
<dbReference type="KEGG" id="rsd:TGRD_337"/>
<dbReference type="HOGENOM" id="CLU_106710_3_1_0"/>
<dbReference type="Proteomes" id="UP000001691">
    <property type="component" value="Chromosome"/>
</dbReference>
<dbReference type="GO" id="GO:0005737">
    <property type="term" value="C:cytoplasm"/>
    <property type="evidence" value="ECO:0007669"/>
    <property type="project" value="UniProtKB-SubCell"/>
</dbReference>
<dbReference type="GO" id="GO:0004222">
    <property type="term" value="F:metalloendopeptidase activity"/>
    <property type="evidence" value="ECO:0007669"/>
    <property type="project" value="InterPro"/>
</dbReference>
<dbReference type="GO" id="GO:0004521">
    <property type="term" value="F:RNA endonuclease activity"/>
    <property type="evidence" value="ECO:0007669"/>
    <property type="project" value="UniProtKB-UniRule"/>
</dbReference>
<dbReference type="GO" id="GO:0008270">
    <property type="term" value="F:zinc ion binding"/>
    <property type="evidence" value="ECO:0007669"/>
    <property type="project" value="UniProtKB-UniRule"/>
</dbReference>
<dbReference type="GO" id="GO:0006364">
    <property type="term" value="P:rRNA processing"/>
    <property type="evidence" value="ECO:0007669"/>
    <property type="project" value="UniProtKB-UniRule"/>
</dbReference>
<dbReference type="Gene3D" id="3.40.390.30">
    <property type="entry name" value="Metalloproteases ('zincins'), catalytic domain"/>
    <property type="match status" value="1"/>
</dbReference>
<dbReference type="HAMAP" id="MF_00009">
    <property type="entry name" value="Endoribonucl_YbeY"/>
    <property type="match status" value="1"/>
</dbReference>
<dbReference type="InterPro" id="IPR023091">
    <property type="entry name" value="MetalPrtase_cat_dom_sf_prd"/>
</dbReference>
<dbReference type="InterPro" id="IPR002036">
    <property type="entry name" value="YbeY"/>
</dbReference>
<dbReference type="NCBIfam" id="TIGR00043">
    <property type="entry name" value="rRNA maturation RNase YbeY"/>
    <property type="match status" value="1"/>
</dbReference>
<dbReference type="PANTHER" id="PTHR46986">
    <property type="entry name" value="ENDORIBONUCLEASE YBEY, CHLOROPLASTIC"/>
    <property type="match status" value="1"/>
</dbReference>
<dbReference type="PANTHER" id="PTHR46986:SF1">
    <property type="entry name" value="ENDORIBONUCLEASE YBEY, CHLOROPLASTIC"/>
    <property type="match status" value="1"/>
</dbReference>
<dbReference type="Pfam" id="PF02130">
    <property type="entry name" value="YbeY"/>
    <property type="match status" value="1"/>
</dbReference>
<dbReference type="SUPFAM" id="SSF55486">
    <property type="entry name" value="Metalloproteases ('zincins'), catalytic domain"/>
    <property type="match status" value="1"/>
</dbReference>